<sequence>MVKTVYITGYKSFELNIYKDDAPEVYYLKQFIAHKLKHLLDEGLEWVLIQGQMGIELWSAEVVIELKKDFPDIKLGIITPFIGHTQRWNDKNQAKYTNIIQQADFTESIHHTEYMGAYQFKQADQFMLDHTDYTILIYDDEQEASPKYFKAMLVEFMEKTNYTCDIVTFDELTDFINDLQWSQDQSFE</sequence>
<accession>Q5HP96</accession>
<evidence type="ECO:0000255" key="1">
    <source>
        <dbReference type="HAMAP-Rule" id="MF_01575"/>
    </source>
</evidence>
<reference key="1">
    <citation type="journal article" date="2005" name="J. Bacteriol.">
        <title>Insights on evolution of virulence and resistance from the complete genome analysis of an early methicillin-resistant Staphylococcus aureus strain and a biofilm-producing methicillin-resistant Staphylococcus epidermidis strain.</title>
        <authorList>
            <person name="Gill S.R."/>
            <person name="Fouts D.E."/>
            <person name="Archer G.L."/>
            <person name="Mongodin E.F."/>
            <person name="DeBoy R.T."/>
            <person name="Ravel J."/>
            <person name="Paulsen I.T."/>
            <person name="Kolonay J.F."/>
            <person name="Brinkac L.M."/>
            <person name="Beanan M.J."/>
            <person name="Dodson R.J."/>
            <person name="Daugherty S.C."/>
            <person name="Madupu R."/>
            <person name="Angiuoli S.V."/>
            <person name="Durkin A.S."/>
            <person name="Haft D.H."/>
            <person name="Vamathevan J.J."/>
            <person name="Khouri H."/>
            <person name="Utterback T.R."/>
            <person name="Lee C."/>
            <person name="Dimitrov G."/>
            <person name="Jiang L."/>
            <person name="Qin H."/>
            <person name="Weidman J."/>
            <person name="Tran K."/>
            <person name="Kang K.H."/>
            <person name="Hance I.R."/>
            <person name="Nelson K.E."/>
            <person name="Fraser C.M."/>
        </authorList>
    </citation>
    <scope>NUCLEOTIDE SEQUENCE [LARGE SCALE GENOMIC DNA]</scope>
    <source>
        <strain>ATCC 35984 / DSM 28319 / BCRC 17069 / CCUG 31568 / BM 3577 / RP62A</strain>
    </source>
</reference>
<protein>
    <recommendedName>
        <fullName evidence="1">UPF0398 protein SERP1017</fullName>
    </recommendedName>
</protein>
<name>Y1017_STAEQ</name>
<gene>
    <name type="ordered locus">SERP1017</name>
</gene>
<organism>
    <name type="scientific">Staphylococcus epidermidis (strain ATCC 35984 / DSM 28319 / BCRC 17069 / CCUG 31568 / BM 3577 / RP62A)</name>
    <dbReference type="NCBI Taxonomy" id="176279"/>
    <lineage>
        <taxon>Bacteria</taxon>
        <taxon>Bacillati</taxon>
        <taxon>Bacillota</taxon>
        <taxon>Bacilli</taxon>
        <taxon>Bacillales</taxon>
        <taxon>Staphylococcaceae</taxon>
        <taxon>Staphylococcus</taxon>
    </lineage>
</organism>
<feature type="chain" id="PRO_0000267178" description="UPF0398 protein SERP1017">
    <location>
        <begin position="1"/>
        <end position="188"/>
    </location>
</feature>
<dbReference type="EMBL" id="CP000029">
    <property type="protein sequence ID" value="AAW54385.1"/>
    <property type="molecule type" value="Genomic_DNA"/>
</dbReference>
<dbReference type="RefSeq" id="WP_001831285.1">
    <property type="nucleotide sequence ID" value="NC_002976.3"/>
</dbReference>
<dbReference type="SMR" id="Q5HP96"/>
<dbReference type="STRING" id="176279.SERP1017"/>
<dbReference type="KEGG" id="ser:SERP1017"/>
<dbReference type="eggNOG" id="COG4474">
    <property type="taxonomic scope" value="Bacteria"/>
</dbReference>
<dbReference type="HOGENOM" id="CLU_105319_0_0_9"/>
<dbReference type="Proteomes" id="UP000000531">
    <property type="component" value="Chromosome"/>
</dbReference>
<dbReference type="Gene3D" id="3.40.50.450">
    <property type="match status" value="1"/>
</dbReference>
<dbReference type="HAMAP" id="MF_01575">
    <property type="entry name" value="UPF0398"/>
    <property type="match status" value="1"/>
</dbReference>
<dbReference type="InterPro" id="IPR010697">
    <property type="entry name" value="YspA"/>
</dbReference>
<dbReference type="NCBIfam" id="NF010181">
    <property type="entry name" value="PRK13660.1"/>
    <property type="match status" value="1"/>
</dbReference>
<dbReference type="PANTHER" id="PTHR38440:SF1">
    <property type="entry name" value="UPF0398 PROTEIN SPR0331"/>
    <property type="match status" value="1"/>
</dbReference>
<dbReference type="PANTHER" id="PTHR38440">
    <property type="entry name" value="UPF0398 PROTEIN YPSA"/>
    <property type="match status" value="1"/>
</dbReference>
<dbReference type="Pfam" id="PF06908">
    <property type="entry name" value="YpsA"/>
    <property type="match status" value="1"/>
</dbReference>
<dbReference type="PIRSF" id="PIRSF021290">
    <property type="entry name" value="DUF1273"/>
    <property type="match status" value="1"/>
</dbReference>
<dbReference type="SUPFAM" id="SSF102405">
    <property type="entry name" value="MCP/YpsA-like"/>
    <property type="match status" value="1"/>
</dbReference>
<proteinExistence type="inferred from homology"/>
<comment type="similarity">
    <text evidence="1">Belongs to the UPF0398 family.</text>
</comment>
<keyword id="KW-1185">Reference proteome</keyword>